<protein>
    <recommendedName>
        <fullName evidence="1">N-(5'-phosphoribosyl)anthranilate isomerase</fullName>
        <shortName evidence="1">PRAI</shortName>
        <ecNumber evidence="1">5.3.1.24</ecNumber>
    </recommendedName>
</protein>
<dbReference type="EC" id="5.3.1.24" evidence="1"/>
<dbReference type="EMBL" id="AE007317">
    <property type="protein sequence ID" value="AAL00436.1"/>
    <property type="status" value="ALT_INIT"/>
    <property type="molecule type" value="Genomic_DNA"/>
</dbReference>
<dbReference type="PIR" id="G98075">
    <property type="entry name" value="G98075"/>
</dbReference>
<dbReference type="RefSeq" id="NP_359225.1">
    <property type="nucleotide sequence ID" value="NC_003098.1"/>
</dbReference>
<dbReference type="RefSeq" id="WP_000169895.1">
    <property type="nucleotide sequence ID" value="NC_003098.1"/>
</dbReference>
<dbReference type="SMR" id="Q8DNM7"/>
<dbReference type="STRING" id="171101.spr1633"/>
<dbReference type="KEGG" id="spr:spr1633"/>
<dbReference type="PATRIC" id="fig|171101.6.peg.1762"/>
<dbReference type="eggNOG" id="COG0135">
    <property type="taxonomic scope" value="Bacteria"/>
</dbReference>
<dbReference type="HOGENOM" id="CLU_076364_1_0_9"/>
<dbReference type="UniPathway" id="UPA00035">
    <property type="reaction ID" value="UER00042"/>
</dbReference>
<dbReference type="Proteomes" id="UP000000586">
    <property type="component" value="Chromosome"/>
</dbReference>
<dbReference type="GO" id="GO:0004640">
    <property type="term" value="F:phosphoribosylanthranilate isomerase activity"/>
    <property type="evidence" value="ECO:0000318"/>
    <property type="project" value="GO_Central"/>
</dbReference>
<dbReference type="GO" id="GO:0000162">
    <property type="term" value="P:L-tryptophan biosynthetic process"/>
    <property type="evidence" value="ECO:0000318"/>
    <property type="project" value="GO_Central"/>
</dbReference>
<dbReference type="CDD" id="cd00405">
    <property type="entry name" value="PRAI"/>
    <property type="match status" value="1"/>
</dbReference>
<dbReference type="FunFam" id="3.20.20.70:FF:000075">
    <property type="entry name" value="Tryptophan biosynthesis protein TRP1"/>
    <property type="match status" value="1"/>
</dbReference>
<dbReference type="Gene3D" id="3.20.20.70">
    <property type="entry name" value="Aldolase class I"/>
    <property type="match status" value="1"/>
</dbReference>
<dbReference type="HAMAP" id="MF_00135">
    <property type="entry name" value="PRAI"/>
    <property type="match status" value="1"/>
</dbReference>
<dbReference type="InterPro" id="IPR013785">
    <property type="entry name" value="Aldolase_TIM"/>
</dbReference>
<dbReference type="InterPro" id="IPR001240">
    <property type="entry name" value="PRAI_dom"/>
</dbReference>
<dbReference type="InterPro" id="IPR011060">
    <property type="entry name" value="RibuloseP-bd_barrel"/>
</dbReference>
<dbReference type="InterPro" id="IPR044643">
    <property type="entry name" value="TrpF_fam"/>
</dbReference>
<dbReference type="NCBIfam" id="NF002300">
    <property type="entry name" value="PRK01222.1-7"/>
    <property type="match status" value="1"/>
</dbReference>
<dbReference type="PANTHER" id="PTHR42894">
    <property type="entry name" value="N-(5'-PHOSPHORIBOSYL)ANTHRANILATE ISOMERASE"/>
    <property type="match status" value="1"/>
</dbReference>
<dbReference type="PANTHER" id="PTHR42894:SF1">
    <property type="entry name" value="N-(5'-PHOSPHORIBOSYL)ANTHRANILATE ISOMERASE"/>
    <property type="match status" value="1"/>
</dbReference>
<dbReference type="Pfam" id="PF00697">
    <property type="entry name" value="PRAI"/>
    <property type="match status" value="1"/>
</dbReference>
<dbReference type="SUPFAM" id="SSF51366">
    <property type="entry name" value="Ribulose-phoshate binding barrel"/>
    <property type="match status" value="1"/>
</dbReference>
<reference key="1">
    <citation type="journal article" date="2001" name="J. Bacteriol.">
        <title>Genome of the bacterium Streptococcus pneumoniae strain R6.</title>
        <authorList>
            <person name="Hoskins J."/>
            <person name="Alborn W.E. Jr."/>
            <person name="Arnold J."/>
            <person name="Blaszczak L.C."/>
            <person name="Burgett S."/>
            <person name="DeHoff B.S."/>
            <person name="Estrem S.T."/>
            <person name="Fritz L."/>
            <person name="Fu D.-J."/>
            <person name="Fuller W."/>
            <person name="Geringer C."/>
            <person name="Gilmour R."/>
            <person name="Glass J.S."/>
            <person name="Khoja H."/>
            <person name="Kraft A.R."/>
            <person name="Lagace R.E."/>
            <person name="LeBlanc D.J."/>
            <person name="Lee L.N."/>
            <person name="Lefkowitz E.J."/>
            <person name="Lu J."/>
            <person name="Matsushima P."/>
            <person name="McAhren S.M."/>
            <person name="McHenney M."/>
            <person name="McLeaster K."/>
            <person name="Mundy C.W."/>
            <person name="Nicas T.I."/>
            <person name="Norris F.H."/>
            <person name="O'Gara M."/>
            <person name="Peery R.B."/>
            <person name="Robertson G.T."/>
            <person name="Rockey P."/>
            <person name="Sun P.-M."/>
            <person name="Winkler M.E."/>
            <person name="Yang Y."/>
            <person name="Young-Bellido M."/>
            <person name="Zhao G."/>
            <person name="Zook C.A."/>
            <person name="Baltz R.H."/>
            <person name="Jaskunas S.R."/>
            <person name="Rosteck P.R. Jr."/>
            <person name="Skatrud P.L."/>
            <person name="Glass J.I."/>
        </authorList>
    </citation>
    <scope>NUCLEOTIDE SEQUENCE [LARGE SCALE GENOMIC DNA]</scope>
    <source>
        <strain>ATCC BAA-255 / R6</strain>
    </source>
</reference>
<accession>Q8DNM7</accession>
<comment type="catalytic activity">
    <reaction evidence="1">
        <text>N-(5-phospho-beta-D-ribosyl)anthranilate = 1-(2-carboxyphenylamino)-1-deoxy-D-ribulose 5-phosphate</text>
        <dbReference type="Rhea" id="RHEA:21540"/>
        <dbReference type="ChEBI" id="CHEBI:18277"/>
        <dbReference type="ChEBI" id="CHEBI:58613"/>
        <dbReference type="EC" id="5.3.1.24"/>
    </reaction>
</comment>
<comment type="pathway">
    <text evidence="1">Amino-acid biosynthesis; L-tryptophan biosynthesis; L-tryptophan from chorismate: step 3/5.</text>
</comment>
<comment type="similarity">
    <text evidence="1">Belongs to the TrpF family.</text>
</comment>
<comment type="sequence caution" evidence="2">
    <conflict type="erroneous initiation">
        <sequence resource="EMBL-CDS" id="AAL00436"/>
    </conflict>
</comment>
<evidence type="ECO:0000255" key="1">
    <source>
        <dbReference type="HAMAP-Rule" id="MF_00135"/>
    </source>
</evidence>
<evidence type="ECO:0000305" key="2"/>
<keyword id="KW-0028">Amino-acid biosynthesis</keyword>
<keyword id="KW-0057">Aromatic amino acid biosynthesis</keyword>
<keyword id="KW-0413">Isomerase</keyword>
<keyword id="KW-1185">Reference proteome</keyword>
<keyword id="KW-0822">Tryptophan biosynthesis</keyword>
<gene>
    <name evidence="1" type="primary">trpF</name>
    <name type="ordered locus">spr1633</name>
</gene>
<organism>
    <name type="scientific">Streptococcus pneumoniae (strain ATCC BAA-255 / R6)</name>
    <dbReference type="NCBI Taxonomy" id="171101"/>
    <lineage>
        <taxon>Bacteria</taxon>
        <taxon>Bacillati</taxon>
        <taxon>Bacillota</taxon>
        <taxon>Bacilli</taxon>
        <taxon>Lactobacillales</taxon>
        <taxon>Streptococcaceae</taxon>
        <taxon>Streptococcus</taxon>
    </lineage>
</organism>
<sequence length="199" mass="21366">MTKVKICGLSTKEAVETAVSAGADYIGFVFAPSKRQVTLEEAAELAKLIPADVKKVGVFVSPSRVELLEAIDKVGLDLVQVHGQVADDLFENLPCASIQAVQVDGNGHVPNSQADYLLFDAPVAGSGQPFDWGQLDTTGLAQPFFIAGGLNEDNVVKAIQHFTPYAVDVSSGVETDGQKDHEKIRRFIERVKNGISRTK</sequence>
<feature type="chain" id="PRO_0000154387" description="N-(5'-phosphoribosyl)anthranilate isomerase">
    <location>
        <begin position="1"/>
        <end position="199"/>
    </location>
</feature>
<proteinExistence type="inferred from homology"/>
<name>TRPF_STRR6</name>